<keyword id="KW-0489">Methyltransferase</keyword>
<keyword id="KW-0949">S-adenosyl-L-methionine</keyword>
<keyword id="KW-0808">Transferase</keyword>
<keyword id="KW-0819">tRNA processing</keyword>
<protein>
    <recommendedName>
        <fullName evidence="2">tRNA (guanine-N(7)-)-methyltransferase</fullName>
        <ecNumber evidence="2">2.1.1.33</ecNumber>
    </recommendedName>
    <alternativeName>
        <fullName evidence="2">tRNA (guanine(46)-N(7))-methyltransferase</fullName>
    </alternativeName>
    <alternativeName>
        <fullName evidence="2">tRNA(m7G46)-methyltransferase</fullName>
    </alternativeName>
</protein>
<accession>Q1IGD2</accession>
<dbReference type="EC" id="2.1.1.33" evidence="2"/>
<dbReference type="EMBL" id="CT573326">
    <property type="protein sequence ID" value="CAK13270.1"/>
    <property type="molecule type" value="Genomic_DNA"/>
</dbReference>
<dbReference type="RefSeq" id="WP_011531730.1">
    <property type="nucleotide sequence ID" value="NC_008027.1"/>
</dbReference>
<dbReference type="SMR" id="Q1IGD2"/>
<dbReference type="STRING" id="384676.PSEEN0308"/>
<dbReference type="GeneID" id="32803651"/>
<dbReference type="KEGG" id="pen:PSEEN0308"/>
<dbReference type="eggNOG" id="COG0220">
    <property type="taxonomic scope" value="Bacteria"/>
</dbReference>
<dbReference type="HOGENOM" id="CLU_050910_0_1_6"/>
<dbReference type="OrthoDB" id="9802090at2"/>
<dbReference type="UniPathway" id="UPA00989"/>
<dbReference type="Proteomes" id="UP000000658">
    <property type="component" value="Chromosome"/>
</dbReference>
<dbReference type="GO" id="GO:0043527">
    <property type="term" value="C:tRNA methyltransferase complex"/>
    <property type="evidence" value="ECO:0007669"/>
    <property type="project" value="TreeGrafter"/>
</dbReference>
<dbReference type="GO" id="GO:0008176">
    <property type="term" value="F:tRNA (guanine(46)-N7)-methyltransferase activity"/>
    <property type="evidence" value="ECO:0007669"/>
    <property type="project" value="UniProtKB-UniRule"/>
</dbReference>
<dbReference type="CDD" id="cd02440">
    <property type="entry name" value="AdoMet_MTases"/>
    <property type="match status" value="1"/>
</dbReference>
<dbReference type="FunFam" id="3.40.50.150:FF:000035">
    <property type="entry name" value="tRNA (guanine-N(7)-)-methyltransferase"/>
    <property type="match status" value="1"/>
</dbReference>
<dbReference type="Gene3D" id="3.40.50.150">
    <property type="entry name" value="Vaccinia Virus protein VP39"/>
    <property type="match status" value="1"/>
</dbReference>
<dbReference type="HAMAP" id="MF_01057">
    <property type="entry name" value="tRNA_methyltr_TrmB"/>
    <property type="match status" value="1"/>
</dbReference>
<dbReference type="InterPro" id="IPR029063">
    <property type="entry name" value="SAM-dependent_MTases_sf"/>
</dbReference>
<dbReference type="InterPro" id="IPR003358">
    <property type="entry name" value="tRNA_(Gua-N-7)_MeTrfase_Trmb"/>
</dbReference>
<dbReference type="InterPro" id="IPR055361">
    <property type="entry name" value="tRNA_methyltr_TrmB_bact"/>
</dbReference>
<dbReference type="NCBIfam" id="TIGR00091">
    <property type="entry name" value="tRNA (guanosine(46)-N7)-methyltransferase TrmB"/>
    <property type="match status" value="1"/>
</dbReference>
<dbReference type="PANTHER" id="PTHR23417">
    <property type="entry name" value="3-DEOXY-D-MANNO-OCTULOSONIC-ACID TRANSFERASE/TRNA GUANINE-N 7 - -METHYLTRANSFERASE"/>
    <property type="match status" value="1"/>
</dbReference>
<dbReference type="PANTHER" id="PTHR23417:SF14">
    <property type="entry name" value="PENTACOTRIPEPTIDE-REPEAT REGION OF PRORP DOMAIN-CONTAINING PROTEIN"/>
    <property type="match status" value="1"/>
</dbReference>
<dbReference type="Pfam" id="PF02390">
    <property type="entry name" value="Methyltransf_4"/>
    <property type="match status" value="1"/>
</dbReference>
<dbReference type="SUPFAM" id="SSF53335">
    <property type="entry name" value="S-adenosyl-L-methionine-dependent methyltransferases"/>
    <property type="match status" value="1"/>
</dbReference>
<dbReference type="PROSITE" id="PS51625">
    <property type="entry name" value="SAM_MT_TRMB"/>
    <property type="match status" value="1"/>
</dbReference>
<reference key="1">
    <citation type="journal article" date="2006" name="Nat. Biotechnol.">
        <title>Complete genome sequence of the entomopathogenic and metabolically versatile soil bacterium Pseudomonas entomophila.</title>
        <authorList>
            <person name="Vodovar N."/>
            <person name="Vallenet D."/>
            <person name="Cruveiller S."/>
            <person name="Rouy Z."/>
            <person name="Barbe V."/>
            <person name="Acosta C."/>
            <person name="Cattolico L."/>
            <person name="Jubin C."/>
            <person name="Lajus A."/>
            <person name="Segurens B."/>
            <person name="Vacherie B."/>
            <person name="Wincker P."/>
            <person name="Weissenbach J."/>
            <person name="Lemaitre B."/>
            <person name="Medigue C."/>
            <person name="Boccard F."/>
        </authorList>
    </citation>
    <scope>NUCLEOTIDE SEQUENCE [LARGE SCALE GENOMIC DNA]</scope>
    <source>
        <strain>L48</strain>
    </source>
</reference>
<proteinExistence type="inferred from homology"/>
<sequence length="240" mass="27194">MTESQETPITEDGEARPHRRIKSFVMRAGRMTEGQQRGLEQGGPLFILPLADSPVDYDQVFGRSAPRTLEIGFGMGHSLLEMAAAAPELDFIGVEVHRPGVGALLNGVLTQGLKNLRVYDCDAIEVLNRCVADNSLDRLMLFFPDPWHKARHHKRRIVQPEFAELVRRKLKVGGVFHMATDWEPYAEHMLEVMKVAPGYRNQAADGAYVPRPEERPITKFERRGERLGHGVWDLKFEKVD</sequence>
<feature type="chain" id="PRO_0000288204" description="tRNA (guanine-N(7)-)-methyltransferase">
    <location>
        <begin position="1"/>
        <end position="240"/>
    </location>
</feature>
<feature type="active site" evidence="1">
    <location>
        <position position="145"/>
    </location>
</feature>
<feature type="binding site" evidence="2">
    <location>
        <position position="70"/>
    </location>
    <ligand>
        <name>S-adenosyl-L-methionine</name>
        <dbReference type="ChEBI" id="CHEBI:59789"/>
    </ligand>
</feature>
<feature type="binding site" evidence="2">
    <location>
        <position position="95"/>
    </location>
    <ligand>
        <name>S-adenosyl-L-methionine</name>
        <dbReference type="ChEBI" id="CHEBI:59789"/>
    </ligand>
</feature>
<feature type="binding site" evidence="2">
    <location>
        <position position="122"/>
    </location>
    <ligand>
        <name>S-adenosyl-L-methionine</name>
        <dbReference type="ChEBI" id="CHEBI:59789"/>
    </ligand>
</feature>
<feature type="binding site" evidence="2">
    <location>
        <position position="145"/>
    </location>
    <ligand>
        <name>S-adenosyl-L-methionine</name>
        <dbReference type="ChEBI" id="CHEBI:59789"/>
    </ligand>
</feature>
<feature type="binding site" evidence="2">
    <location>
        <position position="149"/>
    </location>
    <ligand>
        <name>substrate</name>
    </ligand>
</feature>
<feature type="binding site" evidence="2">
    <location>
        <position position="181"/>
    </location>
    <ligand>
        <name>substrate</name>
    </ligand>
</feature>
<feature type="binding site" evidence="2">
    <location>
        <begin position="218"/>
        <end position="221"/>
    </location>
    <ligand>
        <name>substrate</name>
    </ligand>
</feature>
<gene>
    <name evidence="2" type="primary">trmB</name>
    <name type="ordered locus">PSEEN0308</name>
</gene>
<evidence type="ECO:0000250" key="1"/>
<evidence type="ECO:0000255" key="2">
    <source>
        <dbReference type="HAMAP-Rule" id="MF_01057"/>
    </source>
</evidence>
<comment type="function">
    <text evidence="2">Catalyzes the formation of N(7)-methylguanine at position 46 (m7G46) in tRNA.</text>
</comment>
<comment type="catalytic activity">
    <reaction evidence="2">
        <text>guanosine(46) in tRNA + S-adenosyl-L-methionine = N(7)-methylguanosine(46) in tRNA + S-adenosyl-L-homocysteine</text>
        <dbReference type="Rhea" id="RHEA:42708"/>
        <dbReference type="Rhea" id="RHEA-COMP:10188"/>
        <dbReference type="Rhea" id="RHEA-COMP:10189"/>
        <dbReference type="ChEBI" id="CHEBI:57856"/>
        <dbReference type="ChEBI" id="CHEBI:59789"/>
        <dbReference type="ChEBI" id="CHEBI:74269"/>
        <dbReference type="ChEBI" id="CHEBI:74480"/>
        <dbReference type="EC" id="2.1.1.33"/>
    </reaction>
</comment>
<comment type="pathway">
    <text evidence="2">tRNA modification; N(7)-methylguanine-tRNA biosynthesis.</text>
</comment>
<comment type="similarity">
    <text evidence="2">Belongs to the class I-like SAM-binding methyltransferase superfamily. TrmB family.</text>
</comment>
<name>TRMB_PSEE4</name>
<organism>
    <name type="scientific">Pseudomonas entomophila (strain L48)</name>
    <dbReference type="NCBI Taxonomy" id="384676"/>
    <lineage>
        <taxon>Bacteria</taxon>
        <taxon>Pseudomonadati</taxon>
        <taxon>Pseudomonadota</taxon>
        <taxon>Gammaproteobacteria</taxon>
        <taxon>Pseudomonadales</taxon>
        <taxon>Pseudomonadaceae</taxon>
        <taxon>Pseudomonas</taxon>
    </lineage>
</organism>